<proteinExistence type="inferred from homology"/>
<name>003R_FRG3G</name>
<feature type="signal peptide" evidence="1">
    <location>
        <begin position="1"/>
        <end position="32"/>
    </location>
</feature>
<feature type="chain" id="PRO_0000410532" description="Uncharacterized protein 3R">
    <location>
        <begin position="33"/>
        <end position="438"/>
    </location>
</feature>
<gene>
    <name type="ORF">FV3-003R</name>
</gene>
<organism>
    <name type="scientific">Frog virus 3 (isolate Goorha)</name>
    <name type="common">FV-3</name>
    <dbReference type="NCBI Taxonomy" id="654924"/>
    <lineage>
        <taxon>Viruses</taxon>
        <taxon>Varidnaviria</taxon>
        <taxon>Bamfordvirae</taxon>
        <taxon>Nucleocytoviricota</taxon>
        <taxon>Megaviricetes</taxon>
        <taxon>Pimascovirales</taxon>
        <taxon>Iridoviridae</taxon>
        <taxon>Alphairidovirinae</taxon>
        <taxon>Ranavirus</taxon>
        <taxon>Frog virus 3</taxon>
    </lineage>
</organism>
<dbReference type="EMBL" id="AY548484">
    <property type="protein sequence ID" value="AAT09662.1"/>
    <property type="molecule type" value="Genomic_DNA"/>
</dbReference>
<dbReference type="RefSeq" id="YP_031581.1">
    <property type="nucleotide sequence ID" value="NC_005946.1"/>
</dbReference>
<dbReference type="KEGG" id="vg:2947775"/>
<dbReference type="Proteomes" id="UP000008770">
    <property type="component" value="Segment"/>
</dbReference>
<keyword id="KW-1185">Reference proteome</keyword>
<keyword id="KW-0732">Signal</keyword>
<reference key="1">
    <citation type="journal article" date="2004" name="Virology">
        <title>Comparative genomic analyses of frog virus 3, type species of the genus Ranavirus (family Iridoviridae).</title>
        <authorList>
            <person name="Tan W.G."/>
            <person name="Barkman T.J."/>
            <person name="Gregory Chinchar V."/>
            <person name="Essani K."/>
        </authorList>
    </citation>
    <scope>NUCLEOTIDE SEQUENCE [LARGE SCALE GENOMIC DNA]</scope>
</reference>
<sequence length="438" mass="48297">MARPLLGKTSSVRRRLESLSACSIFFFLRKFCQKMASLVFLNSPVYQMSNILLTERRQVDRAMGGSDDDGVMVVALSPSDFKTVLGSALLAVERDMVHVVPKYLQTPGILHDMLVLLTPIFGEALSVDMSGATDVMVQQIATAGFVDVDPLHSSVSWKDNVSCPVALLAVSNAVRTMMGQPCQVTLIIDVGTQNILRDLVNLPVEMSGDLQVMAYTKDPLGKVPAVGVSVFDSGSVQKGDAHSVGAPDGLVSFHTHPVSSAVELNYHAGWPSNVDMSSLLTMKNLMHVVVAEEGLWTMARTLSMQRLTKVLTDAEKDVMRAAAFNLFLPLNELRVMGTKDSNNKSLKTYFEVFETFTIGALMKHSGVTPTAFVDRRWLDNTIYHMGFIPWGRDMRFVVEYDLDGTNPFLNTVPTLMSVKRKAKIQEMFDNMVSRMVTS</sequence>
<protein>
    <recommendedName>
        <fullName>Uncharacterized protein 3R</fullName>
    </recommendedName>
</protein>
<accession>Q6GZX2</accession>
<organismHost>
    <name type="scientific">Dryophytes versicolor</name>
    <name type="common">chameleon treefrog</name>
    <dbReference type="NCBI Taxonomy" id="30343"/>
</organismHost>
<organismHost>
    <name type="scientific">Lithobates pipiens</name>
    <name type="common">Northern leopard frog</name>
    <name type="synonym">Rana pipiens</name>
    <dbReference type="NCBI Taxonomy" id="8404"/>
</organismHost>
<organismHost>
    <name type="scientific">Lithobates sylvaticus</name>
    <name type="common">Wood frog</name>
    <name type="synonym">Rana sylvatica</name>
    <dbReference type="NCBI Taxonomy" id="45438"/>
</organismHost>
<organismHost>
    <name type="scientific">Notophthalmus viridescens</name>
    <name type="common">Eastern newt</name>
    <name type="synonym">Triturus viridescens</name>
    <dbReference type="NCBI Taxonomy" id="8316"/>
</organismHost>
<evidence type="ECO:0000255" key="1"/>